<dbReference type="EMBL" id="AP006878">
    <property type="protein sequence ID" value="BAD85826.1"/>
    <property type="molecule type" value="Genomic_DNA"/>
</dbReference>
<dbReference type="RefSeq" id="WP_011250588.1">
    <property type="nucleotide sequence ID" value="NC_006624.1"/>
</dbReference>
<dbReference type="SMR" id="Q5JIU9"/>
<dbReference type="FunCoup" id="Q5JIU9">
    <property type="interactions" value="112"/>
</dbReference>
<dbReference type="IntAct" id="Q5JIU9">
    <property type="interactions" value="1"/>
</dbReference>
<dbReference type="MINT" id="Q5JIU9"/>
<dbReference type="STRING" id="69014.TK1637"/>
<dbReference type="EnsemblBacteria" id="BAD85826">
    <property type="protein sequence ID" value="BAD85826"/>
    <property type="gene ID" value="TK1637"/>
</dbReference>
<dbReference type="GeneID" id="78448165"/>
<dbReference type="KEGG" id="tko:TK1637"/>
<dbReference type="PATRIC" id="fig|69014.16.peg.1596"/>
<dbReference type="eggNOG" id="arCOG00971">
    <property type="taxonomic scope" value="Archaea"/>
</dbReference>
<dbReference type="HOGENOM" id="CLU_035750_4_1_2"/>
<dbReference type="InParanoid" id="Q5JIU9"/>
<dbReference type="OrthoDB" id="9421at2157"/>
<dbReference type="PhylomeDB" id="Q5JIU9"/>
<dbReference type="Proteomes" id="UP000000536">
    <property type="component" value="Chromosome"/>
</dbReference>
<dbReference type="GO" id="GO:0005737">
    <property type="term" value="C:cytoplasm"/>
    <property type="evidence" value="ECO:0007669"/>
    <property type="project" value="UniProtKB-SubCell"/>
</dbReference>
<dbReference type="GO" id="GO:0019773">
    <property type="term" value="C:proteasome core complex, alpha-subunit complex"/>
    <property type="evidence" value="ECO:0000250"/>
    <property type="project" value="UniProtKB"/>
</dbReference>
<dbReference type="GO" id="GO:0004298">
    <property type="term" value="F:threonine-type endopeptidase activity"/>
    <property type="evidence" value="ECO:0007669"/>
    <property type="project" value="InterPro"/>
</dbReference>
<dbReference type="GO" id="GO:0043161">
    <property type="term" value="P:proteasome-mediated ubiquitin-dependent protein catabolic process"/>
    <property type="evidence" value="ECO:0000318"/>
    <property type="project" value="GO_Central"/>
</dbReference>
<dbReference type="CDD" id="cd03756">
    <property type="entry name" value="proteasome_alpha_archeal"/>
    <property type="match status" value="1"/>
</dbReference>
<dbReference type="FunFam" id="3.60.20.10:FF:000004">
    <property type="entry name" value="Proteasome subunit alpha type-4"/>
    <property type="match status" value="1"/>
</dbReference>
<dbReference type="Gene3D" id="3.60.20.10">
    <property type="entry name" value="Glutamine Phosphoribosylpyrophosphate, subunit 1, domain 1"/>
    <property type="match status" value="1"/>
</dbReference>
<dbReference type="HAMAP" id="MF_00289_A">
    <property type="entry name" value="Proteasome_A_A"/>
    <property type="match status" value="1"/>
</dbReference>
<dbReference type="InterPro" id="IPR029055">
    <property type="entry name" value="Ntn_hydrolases_N"/>
</dbReference>
<dbReference type="InterPro" id="IPR050115">
    <property type="entry name" value="Proteasome_alpha"/>
</dbReference>
<dbReference type="InterPro" id="IPR023332">
    <property type="entry name" value="Proteasome_alpha-type"/>
</dbReference>
<dbReference type="InterPro" id="IPR019982">
    <property type="entry name" value="Proteasome_asu_arc"/>
</dbReference>
<dbReference type="InterPro" id="IPR000426">
    <property type="entry name" value="Proteasome_asu_N"/>
</dbReference>
<dbReference type="InterPro" id="IPR001353">
    <property type="entry name" value="Proteasome_sua/b"/>
</dbReference>
<dbReference type="NCBIfam" id="TIGR03633">
    <property type="entry name" value="arc_protsome_A"/>
    <property type="match status" value="1"/>
</dbReference>
<dbReference type="NCBIfam" id="NF003075">
    <property type="entry name" value="PRK03996.1"/>
    <property type="match status" value="1"/>
</dbReference>
<dbReference type="PANTHER" id="PTHR11599">
    <property type="entry name" value="PROTEASOME SUBUNIT ALPHA/BETA"/>
    <property type="match status" value="1"/>
</dbReference>
<dbReference type="Pfam" id="PF00227">
    <property type="entry name" value="Proteasome"/>
    <property type="match status" value="1"/>
</dbReference>
<dbReference type="Pfam" id="PF10584">
    <property type="entry name" value="Proteasome_A_N"/>
    <property type="match status" value="1"/>
</dbReference>
<dbReference type="SMART" id="SM00948">
    <property type="entry name" value="Proteasome_A_N"/>
    <property type="match status" value="1"/>
</dbReference>
<dbReference type="SUPFAM" id="SSF56235">
    <property type="entry name" value="N-terminal nucleophile aminohydrolases (Ntn hydrolases)"/>
    <property type="match status" value="1"/>
</dbReference>
<dbReference type="PROSITE" id="PS00388">
    <property type="entry name" value="PROTEASOME_ALPHA_1"/>
    <property type="match status" value="1"/>
</dbReference>
<dbReference type="PROSITE" id="PS51475">
    <property type="entry name" value="PROTEASOME_ALPHA_2"/>
    <property type="match status" value="1"/>
</dbReference>
<sequence length="260" mass="29211">MAFVPPQAGYDRAITVFSPDGRLFQVNYAREAVKRGATAVGVKWKDGVVLAVEKRITSKLIEPSSYEKIFLIDDHIAAAPSGIIADARVLVDRARLEAQIYRLTYGEPVPLTVLVKKICDLKQAHTQYGGVRPFGAALLMAGVNEKPELFETDPSGAYFEWKAVAIGSGRNTAMAIFEEHYRDDIGKDDAIKLAILALAKTLEEPTAEGIEVAYITMDEKRWKKLPREELEKYINEILQEVKEEEVEEKQEDYSELDQNY</sequence>
<keyword id="KW-0963">Cytoplasm</keyword>
<keyword id="KW-0647">Proteasome</keyword>
<keyword id="KW-1185">Reference proteome</keyword>
<name>PSA_THEKO</name>
<reference key="1">
    <citation type="journal article" date="2005" name="Genome Res.">
        <title>Complete genome sequence of the hyperthermophilic archaeon Thermococcus kodakaraensis KOD1 and comparison with Pyrococcus genomes.</title>
        <authorList>
            <person name="Fukui T."/>
            <person name="Atomi H."/>
            <person name="Kanai T."/>
            <person name="Matsumi R."/>
            <person name="Fujiwara S."/>
            <person name="Imanaka T."/>
        </authorList>
    </citation>
    <scope>NUCLEOTIDE SEQUENCE [LARGE SCALE GENOMIC DNA]</scope>
    <source>
        <strain>ATCC BAA-918 / JCM 12380 / KOD1</strain>
    </source>
</reference>
<proteinExistence type="inferred from homology"/>
<evidence type="ECO:0000255" key="1">
    <source>
        <dbReference type="HAMAP-Rule" id="MF_00289"/>
    </source>
</evidence>
<comment type="function">
    <text evidence="1">Component of the proteasome core, a large protease complex with broad specificity involved in protein degradation.</text>
</comment>
<comment type="activity regulation">
    <text evidence="1">The formation of the proteasomal ATPase PAN-20S proteasome complex, via the docking of the C-termini of PAN into the intersubunit pockets in the alpha-rings, triggers opening of the gate for substrate entry. Interconversion between the open-gate and close-gate conformations leads to a dynamic regulation of the 20S proteasome proteolysis activity.</text>
</comment>
<comment type="subunit">
    <text evidence="1">The 20S proteasome core is composed of 14 alpha and 14 beta subunits that assemble into four stacked heptameric rings, resulting in a barrel-shaped structure. The two inner rings, each composed of seven catalytic beta subunits, are sandwiched by two outer rings, each composed of seven alpha subunits. The catalytic chamber with the active sites is on the inside of the barrel. Has a gated structure, the ends of the cylinder being occluded by the N-termini of the alpha-subunits. Is capped at one or both ends by the proteasome regulatory ATPase, PAN.</text>
</comment>
<comment type="subcellular location">
    <subcellularLocation>
        <location evidence="1">Cytoplasm</location>
    </subcellularLocation>
</comment>
<comment type="similarity">
    <text evidence="1">Belongs to the peptidase T1A family.</text>
</comment>
<gene>
    <name evidence="1" type="primary">psmA</name>
    <name type="ordered locus">TK1637</name>
</gene>
<organism>
    <name type="scientific">Thermococcus kodakarensis (strain ATCC BAA-918 / JCM 12380 / KOD1)</name>
    <name type="common">Pyrococcus kodakaraensis (strain KOD1)</name>
    <dbReference type="NCBI Taxonomy" id="69014"/>
    <lineage>
        <taxon>Archaea</taxon>
        <taxon>Methanobacteriati</taxon>
        <taxon>Methanobacteriota</taxon>
        <taxon>Thermococci</taxon>
        <taxon>Thermococcales</taxon>
        <taxon>Thermococcaceae</taxon>
        <taxon>Thermococcus</taxon>
    </lineage>
</organism>
<feature type="chain" id="PRO_0000124185" description="Proteasome subunit alpha">
    <location>
        <begin position="1"/>
        <end position="260"/>
    </location>
</feature>
<accession>Q5JIU9</accession>
<protein>
    <recommendedName>
        <fullName evidence="1">Proteasome subunit alpha</fullName>
    </recommendedName>
    <alternativeName>
        <fullName evidence="1">20S proteasome alpha subunit</fullName>
    </alternativeName>
    <alternativeName>
        <fullName evidence="1">Proteasome core protein PsmA</fullName>
    </alternativeName>
</protein>